<keyword id="KW-0004">4Fe-4S</keyword>
<keyword id="KW-0963">Cytoplasm</keyword>
<keyword id="KW-1015">Disulfide bond</keyword>
<keyword id="KW-0408">Iron</keyword>
<keyword id="KW-0411">Iron-sulfur</keyword>
<keyword id="KW-0479">Metal-binding</keyword>
<keyword id="KW-0489">Methyltransferase</keyword>
<keyword id="KW-0698">rRNA processing</keyword>
<keyword id="KW-0949">S-adenosyl-L-methionine</keyword>
<keyword id="KW-0808">Transferase</keyword>
<keyword id="KW-0819">tRNA processing</keyword>
<reference key="1">
    <citation type="journal article" date="2006" name="Proc. Natl. Acad. Sci. U.S.A.">
        <title>Molecular genetic anatomy of inter- and intraserotype variation in the human bacterial pathogen group A Streptococcus.</title>
        <authorList>
            <person name="Beres S.B."/>
            <person name="Richter E.W."/>
            <person name="Nagiec M.J."/>
            <person name="Sumby P."/>
            <person name="Porcella S.F."/>
            <person name="DeLeo F.R."/>
            <person name="Musser J.M."/>
        </authorList>
    </citation>
    <scope>NUCLEOTIDE SEQUENCE [LARGE SCALE GENOMIC DNA]</scope>
    <source>
        <strain>MGAS10750</strain>
    </source>
</reference>
<dbReference type="EC" id="2.1.1.192" evidence="1"/>
<dbReference type="EMBL" id="CP000262">
    <property type="protein sequence ID" value="ABF38319.1"/>
    <property type="molecule type" value="Genomic_DNA"/>
</dbReference>
<dbReference type="SMR" id="Q1J5R7"/>
<dbReference type="KEGG" id="spi:MGAS10750_Spy1369"/>
<dbReference type="HOGENOM" id="CLU_029101_0_1_9"/>
<dbReference type="Proteomes" id="UP000002434">
    <property type="component" value="Chromosome"/>
</dbReference>
<dbReference type="GO" id="GO:0005737">
    <property type="term" value="C:cytoplasm"/>
    <property type="evidence" value="ECO:0007669"/>
    <property type="project" value="UniProtKB-SubCell"/>
</dbReference>
<dbReference type="GO" id="GO:0051539">
    <property type="term" value="F:4 iron, 4 sulfur cluster binding"/>
    <property type="evidence" value="ECO:0007669"/>
    <property type="project" value="UniProtKB-UniRule"/>
</dbReference>
<dbReference type="GO" id="GO:0046872">
    <property type="term" value="F:metal ion binding"/>
    <property type="evidence" value="ECO:0007669"/>
    <property type="project" value="UniProtKB-KW"/>
</dbReference>
<dbReference type="GO" id="GO:0070040">
    <property type="term" value="F:rRNA (adenine(2503)-C2-)-methyltransferase activity"/>
    <property type="evidence" value="ECO:0007669"/>
    <property type="project" value="UniProtKB-UniRule"/>
</dbReference>
<dbReference type="GO" id="GO:0019843">
    <property type="term" value="F:rRNA binding"/>
    <property type="evidence" value="ECO:0007669"/>
    <property type="project" value="UniProtKB-UniRule"/>
</dbReference>
<dbReference type="GO" id="GO:0002935">
    <property type="term" value="F:tRNA (adenine(37)-C2)-methyltransferase activity"/>
    <property type="evidence" value="ECO:0007669"/>
    <property type="project" value="UniProtKB-UniRule"/>
</dbReference>
<dbReference type="GO" id="GO:0000049">
    <property type="term" value="F:tRNA binding"/>
    <property type="evidence" value="ECO:0007669"/>
    <property type="project" value="UniProtKB-UniRule"/>
</dbReference>
<dbReference type="GO" id="GO:0070475">
    <property type="term" value="P:rRNA base methylation"/>
    <property type="evidence" value="ECO:0007669"/>
    <property type="project" value="UniProtKB-UniRule"/>
</dbReference>
<dbReference type="GO" id="GO:0030488">
    <property type="term" value="P:tRNA methylation"/>
    <property type="evidence" value="ECO:0007669"/>
    <property type="project" value="UniProtKB-UniRule"/>
</dbReference>
<dbReference type="CDD" id="cd01335">
    <property type="entry name" value="Radical_SAM"/>
    <property type="match status" value="1"/>
</dbReference>
<dbReference type="FunFam" id="3.20.20.70:FF:000014">
    <property type="entry name" value="Probable dual-specificity RNA methyltransferase RlmN"/>
    <property type="match status" value="1"/>
</dbReference>
<dbReference type="Gene3D" id="1.10.150.530">
    <property type="match status" value="1"/>
</dbReference>
<dbReference type="Gene3D" id="3.20.20.70">
    <property type="entry name" value="Aldolase class I"/>
    <property type="match status" value="1"/>
</dbReference>
<dbReference type="HAMAP" id="MF_01849">
    <property type="entry name" value="RNA_methyltr_RlmN"/>
    <property type="match status" value="1"/>
</dbReference>
<dbReference type="InterPro" id="IPR013785">
    <property type="entry name" value="Aldolase_TIM"/>
</dbReference>
<dbReference type="InterPro" id="IPR040072">
    <property type="entry name" value="Methyltransferase_A"/>
</dbReference>
<dbReference type="InterPro" id="IPR048641">
    <property type="entry name" value="RlmN_N"/>
</dbReference>
<dbReference type="InterPro" id="IPR027492">
    <property type="entry name" value="RNA_MTrfase_RlmN"/>
</dbReference>
<dbReference type="InterPro" id="IPR004383">
    <property type="entry name" value="rRNA_lsu_MTrfase_RlmN/Cfr"/>
</dbReference>
<dbReference type="InterPro" id="IPR007197">
    <property type="entry name" value="rSAM"/>
</dbReference>
<dbReference type="NCBIfam" id="TIGR00048">
    <property type="entry name" value="rRNA_mod_RlmN"/>
    <property type="match status" value="1"/>
</dbReference>
<dbReference type="PANTHER" id="PTHR30544">
    <property type="entry name" value="23S RRNA METHYLTRANSFERASE"/>
    <property type="match status" value="1"/>
</dbReference>
<dbReference type="PANTHER" id="PTHR30544:SF5">
    <property type="entry name" value="RADICAL SAM CORE DOMAIN-CONTAINING PROTEIN"/>
    <property type="match status" value="1"/>
</dbReference>
<dbReference type="Pfam" id="PF04055">
    <property type="entry name" value="Radical_SAM"/>
    <property type="match status" value="1"/>
</dbReference>
<dbReference type="Pfam" id="PF21016">
    <property type="entry name" value="RlmN_N"/>
    <property type="match status" value="1"/>
</dbReference>
<dbReference type="PIRSF" id="PIRSF006004">
    <property type="entry name" value="CHP00048"/>
    <property type="match status" value="1"/>
</dbReference>
<dbReference type="SFLD" id="SFLDF00275">
    <property type="entry name" value="adenosine_C2_methyltransferase"/>
    <property type="match status" value="1"/>
</dbReference>
<dbReference type="SFLD" id="SFLDS00029">
    <property type="entry name" value="Radical_SAM"/>
    <property type="match status" value="1"/>
</dbReference>
<dbReference type="SUPFAM" id="SSF102114">
    <property type="entry name" value="Radical SAM enzymes"/>
    <property type="match status" value="1"/>
</dbReference>
<dbReference type="PROSITE" id="PS51918">
    <property type="entry name" value="RADICAL_SAM"/>
    <property type="match status" value="1"/>
</dbReference>
<sequence>MKPSIYSLTRDELIAWAVERGQKQFRATQIWDWLYKKRVQSFEEMTNISKDFVSILNDSFCVNPLKQRVVQESADGTVKYLFELPDGMLIETVLMRQHYGHSVCVTTQVGCNIGCTFCASGLIKKQRDLNSGEITAQIMLVQKYFDDRKQGERVSHVVVMGIGEPFDNYKNVMCFLRVINDDNGLAIGARHITVSTSGLAHKIRDFANEGVQVNLAVSLHAPNNDLRSSIMRVNRSFPLEKLFSAIEYYIEKTNRRVTFEYIMLNEVNDSIKQAQELADLTKTIRKLSYVNLIPYNPVSEHDQYSRSPKERVLAFYDVLKKNGVNCVVRQEHGTDIDAACGQLRSKTMKKDREKVTATK</sequence>
<accession>Q1J5R7</accession>
<organism>
    <name type="scientific">Streptococcus pyogenes serotype M4 (strain MGAS10750)</name>
    <dbReference type="NCBI Taxonomy" id="370554"/>
    <lineage>
        <taxon>Bacteria</taxon>
        <taxon>Bacillati</taxon>
        <taxon>Bacillota</taxon>
        <taxon>Bacilli</taxon>
        <taxon>Lactobacillales</taxon>
        <taxon>Streptococcaceae</taxon>
        <taxon>Streptococcus</taxon>
    </lineage>
</organism>
<gene>
    <name evidence="1" type="primary">rlmN</name>
    <name type="ordered locus">MGAS10750_Spy1369</name>
</gene>
<proteinExistence type="inferred from homology"/>
<protein>
    <recommendedName>
        <fullName evidence="1">Probable dual-specificity RNA methyltransferase RlmN</fullName>
        <ecNumber evidence="1">2.1.1.192</ecNumber>
    </recommendedName>
    <alternativeName>
        <fullName evidence="1">23S rRNA (adenine(2503)-C(2))-methyltransferase</fullName>
    </alternativeName>
    <alternativeName>
        <fullName evidence="1">23S rRNA m2A2503 methyltransferase</fullName>
    </alternativeName>
    <alternativeName>
        <fullName evidence="1">Ribosomal RNA large subunit methyltransferase N</fullName>
    </alternativeName>
    <alternativeName>
        <fullName evidence="1">tRNA (adenine(37)-C(2))-methyltransferase</fullName>
    </alternativeName>
    <alternativeName>
        <fullName evidence="1">tRNA m2A37 methyltransferase</fullName>
    </alternativeName>
</protein>
<feature type="chain" id="PRO_0000350465" description="Probable dual-specificity RNA methyltransferase RlmN">
    <location>
        <begin position="1"/>
        <end position="359"/>
    </location>
</feature>
<feature type="domain" description="Radical SAM core" evidence="2">
    <location>
        <begin position="97"/>
        <end position="329"/>
    </location>
</feature>
<feature type="active site" description="Proton acceptor" evidence="1">
    <location>
        <position position="91"/>
    </location>
</feature>
<feature type="active site" description="S-methylcysteine intermediate" evidence="1">
    <location>
        <position position="340"/>
    </location>
</feature>
<feature type="binding site" evidence="1">
    <location>
        <position position="111"/>
    </location>
    <ligand>
        <name>[4Fe-4S] cluster</name>
        <dbReference type="ChEBI" id="CHEBI:49883"/>
        <note>4Fe-4S-S-AdoMet</note>
    </ligand>
</feature>
<feature type="binding site" evidence="1">
    <location>
        <position position="115"/>
    </location>
    <ligand>
        <name>[4Fe-4S] cluster</name>
        <dbReference type="ChEBI" id="CHEBI:49883"/>
        <note>4Fe-4S-S-AdoMet</note>
    </ligand>
</feature>
<feature type="binding site" evidence="1">
    <location>
        <position position="118"/>
    </location>
    <ligand>
        <name>[4Fe-4S] cluster</name>
        <dbReference type="ChEBI" id="CHEBI:49883"/>
        <note>4Fe-4S-S-AdoMet</note>
    </ligand>
</feature>
<feature type="binding site" evidence="1">
    <location>
        <begin position="163"/>
        <end position="164"/>
    </location>
    <ligand>
        <name>S-adenosyl-L-methionine</name>
        <dbReference type="ChEBI" id="CHEBI:59789"/>
    </ligand>
</feature>
<feature type="binding site" evidence="1">
    <location>
        <position position="195"/>
    </location>
    <ligand>
        <name>S-adenosyl-L-methionine</name>
        <dbReference type="ChEBI" id="CHEBI:59789"/>
    </ligand>
</feature>
<feature type="binding site" evidence="1">
    <location>
        <begin position="218"/>
        <end position="220"/>
    </location>
    <ligand>
        <name>S-adenosyl-L-methionine</name>
        <dbReference type="ChEBI" id="CHEBI:59789"/>
    </ligand>
</feature>
<feature type="binding site" evidence="1">
    <location>
        <position position="296"/>
    </location>
    <ligand>
        <name>S-adenosyl-L-methionine</name>
        <dbReference type="ChEBI" id="CHEBI:59789"/>
    </ligand>
</feature>
<feature type="disulfide bond" description="(transient)" evidence="1">
    <location>
        <begin position="104"/>
        <end position="340"/>
    </location>
</feature>
<evidence type="ECO:0000255" key="1">
    <source>
        <dbReference type="HAMAP-Rule" id="MF_01849"/>
    </source>
</evidence>
<evidence type="ECO:0000255" key="2">
    <source>
        <dbReference type="PROSITE-ProRule" id="PRU01266"/>
    </source>
</evidence>
<name>RLMN_STRPF</name>
<comment type="function">
    <text evidence="1">Specifically methylates position 2 of adenine 2503 in 23S rRNA and position 2 of adenine 37 in tRNAs.</text>
</comment>
<comment type="catalytic activity">
    <reaction evidence="1">
        <text>adenosine(2503) in 23S rRNA + 2 reduced [2Fe-2S]-[ferredoxin] + 2 S-adenosyl-L-methionine = 2-methyladenosine(2503) in 23S rRNA + 5'-deoxyadenosine + L-methionine + 2 oxidized [2Fe-2S]-[ferredoxin] + S-adenosyl-L-homocysteine</text>
        <dbReference type="Rhea" id="RHEA:42916"/>
        <dbReference type="Rhea" id="RHEA-COMP:10000"/>
        <dbReference type="Rhea" id="RHEA-COMP:10001"/>
        <dbReference type="Rhea" id="RHEA-COMP:10152"/>
        <dbReference type="Rhea" id="RHEA-COMP:10282"/>
        <dbReference type="ChEBI" id="CHEBI:17319"/>
        <dbReference type="ChEBI" id="CHEBI:33737"/>
        <dbReference type="ChEBI" id="CHEBI:33738"/>
        <dbReference type="ChEBI" id="CHEBI:57844"/>
        <dbReference type="ChEBI" id="CHEBI:57856"/>
        <dbReference type="ChEBI" id="CHEBI:59789"/>
        <dbReference type="ChEBI" id="CHEBI:74411"/>
        <dbReference type="ChEBI" id="CHEBI:74497"/>
        <dbReference type="EC" id="2.1.1.192"/>
    </reaction>
</comment>
<comment type="catalytic activity">
    <reaction evidence="1">
        <text>adenosine(37) in tRNA + 2 reduced [2Fe-2S]-[ferredoxin] + 2 S-adenosyl-L-methionine = 2-methyladenosine(37) in tRNA + 5'-deoxyadenosine + L-methionine + 2 oxidized [2Fe-2S]-[ferredoxin] + S-adenosyl-L-homocysteine</text>
        <dbReference type="Rhea" id="RHEA:43332"/>
        <dbReference type="Rhea" id="RHEA-COMP:10000"/>
        <dbReference type="Rhea" id="RHEA-COMP:10001"/>
        <dbReference type="Rhea" id="RHEA-COMP:10162"/>
        <dbReference type="Rhea" id="RHEA-COMP:10485"/>
        <dbReference type="ChEBI" id="CHEBI:17319"/>
        <dbReference type="ChEBI" id="CHEBI:33737"/>
        <dbReference type="ChEBI" id="CHEBI:33738"/>
        <dbReference type="ChEBI" id="CHEBI:57844"/>
        <dbReference type="ChEBI" id="CHEBI:57856"/>
        <dbReference type="ChEBI" id="CHEBI:59789"/>
        <dbReference type="ChEBI" id="CHEBI:74411"/>
        <dbReference type="ChEBI" id="CHEBI:74497"/>
        <dbReference type="EC" id="2.1.1.192"/>
    </reaction>
</comment>
<comment type="cofactor">
    <cofactor evidence="1">
        <name>[4Fe-4S] cluster</name>
        <dbReference type="ChEBI" id="CHEBI:49883"/>
    </cofactor>
    <text evidence="1">Binds 1 [4Fe-4S] cluster. The cluster is coordinated with 3 cysteines and an exchangeable S-adenosyl-L-methionine.</text>
</comment>
<comment type="subcellular location">
    <subcellularLocation>
        <location evidence="1">Cytoplasm</location>
    </subcellularLocation>
</comment>
<comment type="miscellaneous">
    <text evidence="1">Reaction proceeds by a ping-pong mechanism involving intermediate methylation of a conserved cysteine residue.</text>
</comment>
<comment type="similarity">
    <text evidence="1">Belongs to the radical SAM superfamily. RlmN family.</text>
</comment>